<reference key="1">
    <citation type="submission" date="2008-10" db="EMBL/GenBank/DDBJ databases">
        <title>Genome sequence of Clostridium botulinum A2 Kyoto.</title>
        <authorList>
            <person name="Shrivastava S."/>
            <person name="Brinkac L.M."/>
            <person name="Brown J.L."/>
            <person name="Bruce D."/>
            <person name="Detter C.C."/>
            <person name="Johnson E.A."/>
            <person name="Munk C.A."/>
            <person name="Smith L.A."/>
            <person name="Smith T.J."/>
            <person name="Sutton G."/>
            <person name="Brettin T.S."/>
        </authorList>
    </citation>
    <scope>NUCLEOTIDE SEQUENCE [LARGE SCALE GENOMIC DNA]</scope>
    <source>
        <strain>Kyoto / Type A2</strain>
    </source>
</reference>
<organism>
    <name type="scientific">Clostridium botulinum (strain Kyoto / Type A2)</name>
    <dbReference type="NCBI Taxonomy" id="536232"/>
    <lineage>
        <taxon>Bacteria</taxon>
        <taxon>Bacillati</taxon>
        <taxon>Bacillota</taxon>
        <taxon>Clostridia</taxon>
        <taxon>Eubacteriales</taxon>
        <taxon>Clostridiaceae</taxon>
        <taxon>Clostridium</taxon>
    </lineage>
</organism>
<name>PUR9_CLOBJ</name>
<evidence type="ECO:0000255" key="1">
    <source>
        <dbReference type="HAMAP-Rule" id="MF_00139"/>
    </source>
</evidence>
<evidence type="ECO:0000255" key="2">
    <source>
        <dbReference type="PROSITE-ProRule" id="PRU01202"/>
    </source>
</evidence>
<accession>C1FV76</accession>
<gene>
    <name evidence="1" type="primary">purH</name>
    <name type="ordered locus">CLM_3270</name>
</gene>
<feature type="chain" id="PRO_1000122952" description="Bifunctional purine biosynthesis protein PurH">
    <location>
        <begin position="1"/>
        <end position="499"/>
    </location>
</feature>
<feature type="domain" description="MGS-like" evidence="2">
    <location>
        <begin position="1"/>
        <end position="144"/>
    </location>
</feature>
<sequence length="499" mass="55734">MIKRALISVFDKTGILDLAKFLESRDVEIISTGGTYKHLKENGVKVIDIEEVTGFPEMLDGRVKTLNPLIHGGILAIRDNEEHMKVIEEKGINPIDMVVVNLYPFFNKVEENLSFDEKVEFIDIGGPTMIRAAAKNFKDVVVLTDTKDYENVINEIKENNQVNTQTRKKLAGKVFNLMSAYDAAISNFLLEEEYPEYLTLSYKKNMDLRYGENPHQTAAYYTSTVGKYPMKNFEKLNGKELSYNNIKDMDIAWKTVCEFEEVACCALKHNTPCGVAIGDTVQEAYTKAYECDPISIFGGIVAFNRKVDKETAENLAKIFLEIVVAPDFDEDALEVLKNKKNLRVIKCEEKSTEGKDMAKVDGGILVQKSDNKLLENTKVVTEKSPTEQEMKDLIFGMKVVKYVKSNAIVVVKDGMAKGIGGGQVNRIWAAKEALDRAGDGVVLASDAFFPFGDVAEEAAKWGIKAIIQPGGSIRDEESIKVCNEKGISMVFTGIRHFKH</sequence>
<keyword id="KW-0378">Hydrolase</keyword>
<keyword id="KW-0511">Multifunctional enzyme</keyword>
<keyword id="KW-0658">Purine biosynthesis</keyword>
<keyword id="KW-0808">Transferase</keyword>
<protein>
    <recommendedName>
        <fullName evidence="1">Bifunctional purine biosynthesis protein PurH</fullName>
    </recommendedName>
    <domain>
        <recommendedName>
            <fullName evidence="1">Phosphoribosylaminoimidazolecarboxamide formyltransferase</fullName>
            <ecNumber evidence="1">2.1.2.3</ecNumber>
        </recommendedName>
        <alternativeName>
            <fullName evidence="1">AICAR transformylase</fullName>
        </alternativeName>
    </domain>
    <domain>
        <recommendedName>
            <fullName evidence="1">IMP cyclohydrolase</fullName>
            <ecNumber evidence="1">3.5.4.10</ecNumber>
        </recommendedName>
        <alternativeName>
            <fullName evidence="1">ATIC</fullName>
        </alternativeName>
        <alternativeName>
            <fullName evidence="1">IMP synthase</fullName>
        </alternativeName>
        <alternativeName>
            <fullName evidence="1">Inosinicase</fullName>
        </alternativeName>
    </domain>
</protein>
<proteinExistence type="inferred from homology"/>
<comment type="catalytic activity">
    <reaction evidence="1">
        <text>(6R)-10-formyltetrahydrofolate + 5-amino-1-(5-phospho-beta-D-ribosyl)imidazole-4-carboxamide = 5-formamido-1-(5-phospho-D-ribosyl)imidazole-4-carboxamide + (6S)-5,6,7,8-tetrahydrofolate</text>
        <dbReference type="Rhea" id="RHEA:22192"/>
        <dbReference type="ChEBI" id="CHEBI:57453"/>
        <dbReference type="ChEBI" id="CHEBI:58467"/>
        <dbReference type="ChEBI" id="CHEBI:58475"/>
        <dbReference type="ChEBI" id="CHEBI:195366"/>
        <dbReference type="EC" id="2.1.2.3"/>
    </reaction>
</comment>
<comment type="catalytic activity">
    <reaction evidence="1">
        <text>IMP + H2O = 5-formamido-1-(5-phospho-D-ribosyl)imidazole-4-carboxamide</text>
        <dbReference type="Rhea" id="RHEA:18445"/>
        <dbReference type="ChEBI" id="CHEBI:15377"/>
        <dbReference type="ChEBI" id="CHEBI:58053"/>
        <dbReference type="ChEBI" id="CHEBI:58467"/>
        <dbReference type="EC" id="3.5.4.10"/>
    </reaction>
</comment>
<comment type="pathway">
    <text evidence="1">Purine metabolism; IMP biosynthesis via de novo pathway; 5-formamido-1-(5-phospho-D-ribosyl)imidazole-4-carboxamide from 5-amino-1-(5-phospho-D-ribosyl)imidazole-4-carboxamide (10-formyl THF route): step 1/1.</text>
</comment>
<comment type="pathway">
    <text evidence="1">Purine metabolism; IMP biosynthesis via de novo pathway; IMP from 5-formamido-1-(5-phospho-D-ribosyl)imidazole-4-carboxamide: step 1/1.</text>
</comment>
<comment type="domain">
    <text evidence="1">The IMP cyclohydrolase activity resides in the N-terminal region.</text>
</comment>
<comment type="similarity">
    <text evidence="1">Belongs to the PurH family.</text>
</comment>
<dbReference type="EC" id="2.1.2.3" evidence="1"/>
<dbReference type="EC" id="3.5.4.10" evidence="1"/>
<dbReference type="EMBL" id="CP001581">
    <property type="protein sequence ID" value="ACO87280.1"/>
    <property type="molecule type" value="Genomic_DNA"/>
</dbReference>
<dbReference type="RefSeq" id="WP_012705771.1">
    <property type="nucleotide sequence ID" value="NC_012563.1"/>
</dbReference>
<dbReference type="SMR" id="C1FV76"/>
<dbReference type="KEGG" id="cby:CLM_3270"/>
<dbReference type="eggNOG" id="COG0138">
    <property type="taxonomic scope" value="Bacteria"/>
</dbReference>
<dbReference type="HOGENOM" id="CLU_016316_5_2_9"/>
<dbReference type="UniPathway" id="UPA00074">
    <property type="reaction ID" value="UER00133"/>
</dbReference>
<dbReference type="UniPathway" id="UPA00074">
    <property type="reaction ID" value="UER00135"/>
</dbReference>
<dbReference type="Proteomes" id="UP000001374">
    <property type="component" value="Chromosome"/>
</dbReference>
<dbReference type="GO" id="GO:0005829">
    <property type="term" value="C:cytosol"/>
    <property type="evidence" value="ECO:0007669"/>
    <property type="project" value="TreeGrafter"/>
</dbReference>
<dbReference type="GO" id="GO:0003937">
    <property type="term" value="F:IMP cyclohydrolase activity"/>
    <property type="evidence" value="ECO:0007669"/>
    <property type="project" value="UniProtKB-UniRule"/>
</dbReference>
<dbReference type="GO" id="GO:0004643">
    <property type="term" value="F:phosphoribosylaminoimidazolecarboxamide formyltransferase activity"/>
    <property type="evidence" value="ECO:0007669"/>
    <property type="project" value="UniProtKB-UniRule"/>
</dbReference>
<dbReference type="GO" id="GO:0006189">
    <property type="term" value="P:'de novo' IMP biosynthetic process"/>
    <property type="evidence" value="ECO:0007669"/>
    <property type="project" value="UniProtKB-UniRule"/>
</dbReference>
<dbReference type="CDD" id="cd01421">
    <property type="entry name" value="IMPCH"/>
    <property type="match status" value="1"/>
</dbReference>
<dbReference type="FunFam" id="3.40.140.20:FF:000001">
    <property type="entry name" value="Bifunctional purine biosynthesis protein PurH"/>
    <property type="match status" value="1"/>
</dbReference>
<dbReference type="FunFam" id="3.40.140.20:FF:000002">
    <property type="entry name" value="Bifunctional purine biosynthesis protein PurH"/>
    <property type="match status" value="1"/>
</dbReference>
<dbReference type="FunFam" id="3.40.50.1380:FF:000001">
    <property type="entry name" value="Bifunctional purine biosynthesis protein PurH"/>
    <property type="match status" value="1"/>
</dbReference>
<dbReference type="Gene3D" id="3.40.140.20">
    <property type="match status" value="2"/>
</dbReference>
<dbReference type="Gene3D" id="3.40.50.1380">
    <property type="entry name" value="Methylglyoxal synthase-like domain"/>
    <property type="match status" value="1"/>
</dbReference>
<dbReference type="HAMAP" id="MF_00139">
    <property type="entry name" value="PurH"/>
    <property type="match status" value="1"/>
</dbReference>
<dbReference type="InterPro" id="IPR024051">
    <property type="entry name" value="AICAR_Tfase_dup_dom_sf"/>
</dbReference>
<dbReference type="InterPro" id="IPR016193">
    <property type="entry name" value="Cytidine_deaminase-like"/>
</dbReference>
<dbReference type="InterPro" id="IPR011607">
    <property type="entry name" value="MGS-like_dom"/>
</dbReference>
<dbReference type="InterPro" id="IPR036914">
    <property type="entry name" value="MGS-like_dom_sf"/>
</dbReference>
<dbReference type="InterPro" id="IPR002695">
    <property type="entry name" value="PurH-like"/>
</dbReference>
<dbReference type="NCBIfam" id="NF002049">
    <property type="entry name" value="PRK00881.1"/>
    <property type="match status" value="1"/>
</dbReference>
<dbReference type="NCBIfam" id="TIGR00355">
    <property type="entry name" value="purH"/>
    <property type="match status" value="1"/>
</dbReference>
<dbReference type="PANTHER" id="PTHR11692:SF0">
    <property type="entry name" value="BIFUNCTIONAL PURINE BIOSYNTHESIS PROTEIN ATIC"/>
    <property type="match status" value="1"/>
</dbReference>
<dbReference type="PANTHER" id="PTHR11692">
    <property type="entry name" value="BIFUNCTIONAL PURINE BIOSYNTHESIS PROTEIN PURH"/>
    <property type="match status" value="1"/>
</dbReference>
<dbReference type="Pfam" id="PF01808">
    <property type="entry name" value="AICARFT_IMPCHas"/>
    <property type="match status" value="1"/>
</dbReference>
<dbReference type="Pfam" id="PF02142">
    <property type="entry name" value="MGS"/>
    <property type="match status" value="1"/>
</dbReference>
<dbReference type="PIRSF" id="PIRSF000414">
    <property type="entry name" value="AICARFT_IMPCHas"/>
    <property type="match status" value="1"/>
</dbReference>
<dbReference type="SMART" id="SM00798">
    <property type="entry name" value="AICARFT_IMPCHas"/>
    <property type="match status" value="1"/>
</dbReference>
<dbReference type="SMART" id="SM00851">
    <property type="entry name" value="MGS"/>
    <property type="match status" value="1"/>
</dbReference>
<dbReference type="SUPFAM" id="SSF53927">
    <property type="entry name" value="Cytidine deaminase-like"/>
    <property type="match status" value="1"/>
</dbReference>
<dbReference type="SUPFAM" id="SSF52335">
    <property type="entry name" value="Methylglyoxal synthase-like"/>
    <property type="match status" value="1"/>
</dbReference>
<dbReference type="PROSITE" id="PS51855">
    <property type="entry name" value="MGS"/>
    <property type="match status" value="1"/>
</dbReference>